<protein>
    <recommendedName>
        <fullName evidence="1">DNA-directed RNA polymerase subunit alpha</fullName>
        <shortName evidence="1">PEP</shortName>
        <ecNumber evidence="1">2.7.7.6</ecNumber>
    </recommendedName>
    <alternativeName>
        <fullName evidence="1">Plastid-encoded RNA polymerase subunit alpha</fullName>
        <shortName evidence="1">RNA polymerase subunit alpha</shortName>
    </alternativeName>
</protein>
<comment type="function">
    <text evidence="1">DNA-dependent RNA polymerase catalyzes the transcription of DNA into RNA using the four ribonucleoside triphosphates as substrates.</text>
</comment>
<comment type="catalytic activity">
    <reaction evidence="1">
        <text>RNA(n) + a ribonucleoside 5'-triphosphate = RNA(n+1) + diphosphate</text>
        <dbReference type="Rhea" id="RHEA:21248"/>
        <dbReference type="Rhea" id="RHEA-COMP:14527"/>
        <dbReference type="Rhea" id="RHEA-COMP:17342"/>
        <dbReference type="ChEBI" id="CHEBI:33019"/>
        <dbReference type="ChEBI" id="CHEBI:61557"/>
        <dbReference type="ChEBI" id="CHEBI:140395"/>
        <dbReference type="EC" id="2.7.7.6"/>
    </reaction>
</comment>
<comment type="subunit">
    <text evidence="1">In plastids the minimal PEP RNA polymerase catalytic core is composed of four subunits: alpha, beta, beta', and beta''. When a (nuclear-encoded) sigma factor is associated with the core the holoenzyme is formed, which can initiate transcription.</text>
</comment>
<comment type="subcellular location">
    <subcellularLocation>
        <location>Plastid</location>
        <location>Chloroplast</location>
    </subcellularLocation>
</comment>
<comment type="domain">
    <text evidence="1">The N-terminal domain is essential for RNAP assembly and basal transcription, whereas the C-terminal domain is involved in interaction with transcriptional regulators and with upstream promoter elements.</text>
</comment>
<comment type="similarity">
    <text evidence="1">Belongs to the RNA polymerase alpha chain family.</text>
</comment>
<keyword id="KW-0150">Chloroplast</keyword>
<keyword id="KW-0240">DNA-directed RNA polymerase</keyword>
<keyword id="KW-0548">Nucleotidyltransferase</keyword>
<keyword id="KW-0934">Plastid</keyword>
<keyword id="KW-0804">Transcription</keyword>
<keyword id="KW-0808">Transferase</keyword>
<sequence>MVREEVAGSTQTLQWKCVESRVDSKRLYYGRFILSPLRKGQADTVGIALRRALLGEIEGTCITRAKFGSVPHEYSTIAGIEESVQEILLNLKEIVLRSNLYGVRDASICVKGPRYITAQDIILPPSVEIVDTAQPIANLTEPIDFCIDLQIKRDRGYQTELRKNYQDGSYPIDAVSMPVRNVNYSIFSCGNGNEKHEILFLEIWTNGSLTPKEALYEASRNLIDLFLPFLHAEEEGTSFEENKNRFTPPLFTFQKRLTNLKKNKKGIPLNCIFIDQLELTSRTYNCLKRANIHTLLDLLSKTEEDLLRIDSFRMEDRKHIWDTLEKHLPIDLLKNKLSF</sequence>
<name>RPOA_ELYCA</name>
<feature type="chain" id="PRO_0000175452" description="DNA-directed RNA polymerase subunit alpha">
    <location>
        <begin position="1"/>
        <end position="339"/>
    </location>
</feature>
<feature type="region of interest" description="Alpha N-terminal domain (alpha-NTD)" evidence="1">
    <location>
        <begin position="1"/>
        <end position="233"/>
    </location>
</feature>
<feature type="region of interest" description="Alpha C-terminal domain (alpha-CTD)" evidence="1">
    <location>
        <begin position="266"/>
        <end position="339"/>
    </location>
</feature>
<feature type="sequence variant" description="In strain: Isolate PI578675.">
    <original>L</original>
    <variation>P</variation>
    <location>
        <position position="260"/>
    </location>
</feature>
<dbReference type="EC" id="2.7.7.6" evidence="1"/>
<dbReference type="EMBL" id="AY115928">
    <property type="protein sequence ID" value="AAM97437.1"/>
    <property type="molecule type" value="Genomic_DNA"/>
</dbReference>
<dbReference type="EMBL" id="AY115929">
    <property type="protein sequence ID" value="AAM97438.1"/>
    <property type="molecule type" value="Genomic_DNA"/>
</dbReference>
<dbReference type="EMBL" id="AY115930">
    <property type="protein sequence ID" value="AAM97439.1"/>
    <property type="molecule type" value="Genomic_DNA"/>
</dbReference>
<dbReference type="SMR" id="Q7H6I5"/>
<dbReference type="GO" id="GO:0009507">
    <property type="term" value="C:chloroplast"/>
    <property type="evidence" value="ECO:0007669"/>
    <property type="project" value="UniProtKB-SubCell"/>
</dbReference>
<dbReference type="GO" id="GO:0000428">
    <property type="term" value="C:DNA-directed RNA polymerase complex"/>
    <property type="evidence" value="ECO:0007669"/>
    <property type="project" value="UniProtKB-KW"/>
</dbReference>
<dbReference type="GO" id="GO:0005739">
    <property type="term" value="C:mitochondrion"/>
    <property type="evidence" value="ECO:0007669"/>
    <property type="project" value="GOC"/>
</dbReference>
<dbReference type="GO" id="GO:0003677">
    <property type="term" value="F:DNA binding"/>
    <property type="evidence" value="ECO:0007669"/>
    <property type="project" value="UniProtKB-UniRule"/>
</dbReference>
<dbReference type="GO" id="GO:0003899">
    <property type="term" value="F:DNA-directed RNA polymerase activity"/>
    <property type="evidence" value="ECO:0007669"/>
    <property type="project" value="UniProtKB-UniRule"/>
</dbReference>
<dbReference type="GO" id="GO:0046983">
    <property type="term" value="F:protein dimerization activity"/>
    <property type="evidence" value="ECO:0007669"/>
    <property type="project" value="InterPro"/>
</dbReference>
<dbReference type="GO" id="GO:0006351">
    <property type="term" value="P:DNA-templated transcription"/>
    <property type="evidence" value="ECO:0007669"/>
    <property type="project" value="UniProtKB-UniRule"/>
</dbReference>
<dbReference type="CDD" id="cd06928">
    <property type="entry name" value="RNAP_alpha_NTD"/>
    <property type="match status" value="1"/>
</dbReference>
<dbReference type="FunFam" id="2.170.120.12:FF:000001">
    <property type="entry name" value="DNA-directed RNA polymerase subunit alpha"/>
    <property type="match status" value="1"/>
</dbReference>
<dbReference type="Gene3D" id="1.10.150.20">
    <property type="entry name" value="5' to 3' exonuclease, C-terminal subdomain"/>
    <property type="match status" value="1"/>
</dbReference>
<dbReference type="Gene3D" id="2.170.120.12">
    <property type="entry name" value="DNA-directed RNA polymerase, insert domain"/>
    <property type="match status" value="1"/>
</dbReference>
<dbReference type="Gene3D" id="3.30.1360.10">
    <property type="entry name" value="RNA polymerase, RBP11-like subunit"/>
    <property type="match status" value="1"/>
</dbReference>
<dbReference type="HAMAP" id="MF_00059">
    <property type="entry name" value="RNApol_bact_RpoA"/>
    <property type="match status" value="1"/>
</dbReference>
<dbReference type="InterPro" id="IPR011262">
    <property type="entry name" value="DNA-dir_RNA_pol_insert"/>
</dbReference>
<dbReference type="InterPro" id="IPR011263">
    <property type="entry name" value="DNA-dir_RNA_pol_RpoA/D/Rpb3"/>
</dbReference>
<dbReference type="InterPro" id="IPR011773">
    <property type="entry name" value="DNA-dir_RpoA"/>
</dbReference>
<dbReference type="InterPro" id="IPR036603">
    <property type="entry name" value="RBP11-like"/>
</dbReference>
<dbReference type="InterPro" id="IPR011260">
    <property type="entry name" value="RNAP_asu_C"/>
</dbReference>
<dbReference type="InterPro" id="IPR036643">
    <property type="entry name" value="RNApol_insert_sf"/>
</dbReference>
<dbReference type="NCBIfam" id="TIGR02027">
    <property type="entry name" value="rpoA"/>
    <property type="match status" value="1"/>
</dbReference>
<dbReference type="Pfam" id="PF01000">
    <property type="entry name" value="RNA_pol_A_bac"/>
    <property type="match status" value="1"/>
</dbReference>
<dbReference type="Pfam" id="PF03118">
    <property type="entry name" value="RNA_pol_A_CTD"/>
    <property type="match status" value="1"/>
</dbReference>
<dbReference type="Pfam" id="PF01193">
    <property type="entry name" value="RNA_pol_L"/>
    <property type="match status" value="1"/>
</dbReference>
<dbReference type="SMART" id="SM00662">
    <property type="entry name" value="RPOLD"/>
    <property type="match status" value="1"/>
</dbReference>
<dbReference type="SUPFAM" id="SSF47789">
    <property type="entry name" value="C-terminal domain of RNA polymerase alpha subunit"/>
    <property type="match status" value="1"/>
</dbReference>
<dbReference type="SUPFAM" id="SSF56553">
    <property type="entry name" value="Insert subdomain of RNA polymerase alpha subunit"/>
    <property type="match status" value="1"/>
</dbReference>
<dbReference type="SUPFAM" id="SSF55257">
    <property type="entry name" value="RBP11-like subunits of RNA polymerase"/>
    <property type="match status" value="1"/>
</dbReference>
<geneLocation type="chloroplast"/>
<organism>
    <name type="scientific">Elymus canadensis</name>
    <name type="common">Canada wild rye</name>
    <dbReference type="NCBI Taxonomy" id="29675"/>
    <lineage>
        <taxon>Eukaryota</taxon>
        <taxon>Viridiplantae</taxon>
        <taxon>Streptophyta</taxon>
        <taxon>Embryophyta</taxon>
        <taxon>Tracheophyta</taxon>
        <taxon>Spermatophyta</taxon>
        <taxon>Magnoliopsida</taxon>
        <taxon>Liliopsida</taxon>
        <taxon>Poales</taxon>
        <taxon>Poaceae</taxon>
        <taxon>BOP clade</taxon>
        <taxon>Pooideae</taxon>
        <taxon>Triticodae</taxon>
        <taxon>Triticeae</taxon>
        <taxon>Hordeinae</taxon>
        <taxon>Elymus</taxon>
    </lineage>
</organism>
<gene>
    <name evidence="1" type="primary">rpoA</name>
</gene>
<accession>Q7H6I5</accession>
<accession>Q8LVZ8</accession>
<proteinExistence type="inferred from homology"/>
<reference key="1">
    <citation type="journal article" date="2002" name="Genome">
        <title>Phylogenetic analysis of North American Elymus and the monogenomic Triticeae (Poaceae) using three chloroplast DNA data sets.</title>
        <authorList>
            <person name="Mason-Gamer R.J."/>
            <person name="Orme N.L."/>
            <person name="Anderson C.M."/>
        </authorList>
    </citation>
    <scope>NUCLEOTIDE SEQUENCE [GENOMIC DNA]</scope>
    <source>
        <strain>Isolate MEBarkworth97-86</strain>
        <strain>Isolate PI531568</strain>
        <strain>Isolate PI578675</strain>
    </source>
</reference>
<evidence type="ECO:0000255" key="1">
    <source>
        <dbReference type="HAMAP-Rule" id="MF_00059"/>
    </source>
</evidence>